<evidence type="ECO:0000255" key="1">
    <source>
        <dbReference type="HAMAP-Rule" id="MF_00706"/>
    </source>
</evidence>
<accession>A4TNJ2</accession>
<proteinExistence type="inferred from homology"/>
<name>ECOT_YERPP</name>
<dbReference type="EMBL" id="CP000668">
    <property type="protein sequence ID" value="ABP40854.1"/>
    <property type="molecule type" value="Genomic_DNA"/>
</dbReference>
<dbReference type="RefSeq" id="WP_002210815.1">
    <property type="nucleotide sequence ID" value="NZ_CP009715.1"/>
</dbReference>
<dbReference type="SMR" id="A4TNJ2"/>
<dbReference type="MEROPS" id="I11.001"/>
<dbReference type="GeneID" id="57977350"/>
<dbReference type="KEGG" id="ypp:YPDSF_2482"/>
<dbReference type="PATRIC" id="fig|386656.14.peg.3999"/>
<dbReference type="GO" id="GO:0042597">
    <property type="term" value="C:periplasmic space"/>
    <property type="evidence" value="ECO:0007669"/>
    <property type="project" value="UniProtKB-SubCell"/>
</dbReference>
<dbReference type="GO" id="GO:0004867">
    <property type="term" value="F:serine-type endopeptidase inhibitor activity"/>
    <property type="evidence" value="ECO:0007669"/>
    <property type="project" value="UniProtKB-UniRule"/>
</dbReference>
<dbReference type="CDD" id="cd00242">
    <property type="entry name" value="Ecotin"/>
    <property type="match status" value="1"/>
</dbReference>
<dbReference type="Gene3D" id="2.60.40.550">
    <property type="entry name" value="Ecotin"/>
    <property type="match status" value="1"/>
</dbReference>
<dbReference type="HAMAP" id="MF_00706">
    <property type="entry name" value="Ecotin"/>
    <property type="match status" value="1"/>
</dbReference>
<dbReference type="InterPro" id="IPR036198">
    <property type="entry name" value="Ecotin_sf"/>
</dbReference>
<dbReference type="InterPro" id="IPR005658">
    <property type="entry name" value="Prot_inh_ecotin"/>
</dbReference>
<dbReference type="InterPro" id="IPR023084">
    <property type="entry name" value="Prot_inh_ecotin_gammaproteobac"/>
</dbReference>
<dbReference type="NCBIfam" id="NF002987">
    <property type="entry name" value="PRK03719.1"/>
    <property type="match status" value="1"/>
</dbReference>
<dbReference type="PANTHER" id="PTHR35890">
    <property type="match status" value="1"/>
</dbReference>
<dbReference type="PANTHER" id="PTHR35890:SF3">
    <property type="entry name" value="ECOTIN"/>
    <property type="match status" value="1"/>
</dbReference>
<dbReference type="Pfam" id="PF03974">
    <property type="entry name" value="Ecotin"/>
    <property type="match status" value="1"/>
</dbReference>
<dbReference type="PIRSF" id="PIRSF006865">
    <property type="entry name" value="Prot_inh_ecotin"/>
    <property type="match status" value="1"/>
</dbReference>
<dbReference type="SUPFAM" id="SSF49772">
    <property type="entry name" value="Ecotin, trypsin inhibitor"/>
    <property type="match status" value="1"/>
</dbReference>
<gene>
    <name evidence="1" type="primary">eco</name>
    <name type="ordered locus">YPDSF_2482</name>
</gene>
<protein>
    <recommendedName>
        <fullName evidence="1">Ecotin</fullName>
    </recommendedName>
</protein>
<feature type="signal peptide" evidence="1">
    <location>
        <begin position="1"/>
        <end position="21"/>
    </location>
</feature>
<feature type="chain" id="PRO_5000236916" description="Ecotin">
    <location>
        <begin position="22"/>
        <end position="169"/>
    </location>
</feature>
<feature type="site" description="Reactive bond" evidence="1">
    <location>
        <begin position="110"/>
        <end position="111"/>
    </location>
</feature>
<feature type="disulfide bond" evidence="1">
    <location>
        <begin position="76"/>
        <end position="113"/>
    </location>
</feature>
<comment type="function">
    <text evidence="1">General inhibitor of pancreatic serine proteases: inhibits chymotrypsin, trypsin, elastases, factor X, kallikrein as well as a variety of other proteases.</text>
</comment>
<comment type="subunit">
    <text evidence="1">Homodimer.</text>
</comment>
<comment type="subcellular location">
    <subcellularLocation>
        <location evidence="1">Periplasm</location>
    </subcellularLocation>
</comment>
<comment type="similarity">
    <text evidence="1">Belongs to the protease inhibitor I11 (ecotin) family.</text>
</comment>
<sequence>MKKCSIILASVLLATSINAIADTPTPLNQQQPLEKIAPYPQAEKGMSRQVIFLEPQKDESRFKVELLIGKTLNVDCNRHMLGGNLETRTLSGWGFDYLVMDKISQPASTMMACPEDSKPQVKFVTANLGDAAMQRYNSRLPIVVYVPQGVEVKYRIWEAGEDIRSAQVK</sequence>
<reference key="1">
    <citation type="submission" date="2007-02" db="EMBL/GenBank/DDBJ databases">
        <title>Complete sequence of chromosome of Yersinia pestis Pestoides F.</title>
        <authorList>
            <consortium name="US DOE Joint Genome Institute"/>
            <person name="Copeland A."/>
            <person name="Lucas S."/>
            <person name="Lapidus A."/>
            <person name="Barry K."/>
            <person name="Detter J.C."/>
            <person name="Glavina del Rio T."/>
            <person name="Hammon N."/>
            <person name="Israni S."/>
            <person name="Dalin E."/>
            <person name="Tice H."/>
            <person name="Pitluck S."/>
            <person name="Di Bartolo G."/>
            <person name="Chain P."/>
            <person name="Malfatti S."/>
            <person name="Shin M."/>
            <person name="Vergez L."/>
            <person name="Schmutz J."/>
            <person name="Larimer F."/>
            <person name="Land M."/>
            <person name="Hauser L."/>
            <person name="Worsham P."/>
            <person name="Chu M."/>
            <person name="Bearden S."/>
            <person name="Garcia E."/>
            <person name="Richardson P."/>
        </authorList>
    </citation>
    <scope>NUCLEOTIDE SEQUENCE [LARGE SCALE GENOMIC DNA]</scope>
    <source>
        <strain>Pestoides F</strain>
    </source>
</reference>
<keyword id="KW-1015">Disulfide bond</keyword>
<keyword id="KW-0574">Periplasm</keyword>
<keyword id="KW-0646">Protease inhibitor</keyword>
<keyword id="KW-0722">Serine protease inhibitor</keyword>
<keyword id="KW-0732">Signal</keyword>
<organism>
    <name type="scientific">Yersinia pestis (strain Pestoides F)</name>
    <dbReference type="NCBI Taxonomy" id="386656"/>
    <lineage>
        <taxon>Bacteria</taxon>
        <taxon>Pseudomonadati</taxon>
        <taxon>Pseudomonadota</taxon>
        <taxon>Gammaproteobacteria</taxon>
        <taxon>Enterobacterales</taxon>
        <taxon>Yersiniaceae</taxon>
        <taxon>Yersinia</taxon>
    </lineage>
</organism>